<feature type="chain" id="PRO_0000184069" description="Endo-1,4-beta-xylanase">
    <location>
        <begin position="1"/>
        <end position="194"/>
    </location>
</feature>
<feature type="domain" description="GH11" evidence="1">
    <location>
        <begin position="1"/>
        <end position="191"/>
    </location>
</feature>
<feature type="active site" description="Nucleophile" evidence="2">
    <location>
        <position position="86"/>
    </location>
</feature>
<feature type="active site" description="Proton donor" evidence="3">
    <location>
        <position position="178"/>
    </location>
</feature>
<feature type="modified residue" description="N-acetylglycine" evidence="4">
    <location>
        <position position="1"/>
    </location>
</feature>
<feature type="disulfide bond">
    <location>
        <begin position="110"/>
        <end position="154"/>
    </location>
</feature>
<feature type="strand" evidence="6">
    <location>
        <begin position="6"/>
        <end position="10"/>
    </location>
</feature>
<feature type="strand" evidence="6">
    <location>
        <begin position="13"/>
        <end position="19"/>
    </location>
</feature>
<feature type="strand" evidence="6">
    <location>
        <begin position="25"/>
        <end position="29"/>
    </location>
</feature>
<feature type="strand" evidence="6">
    <location>
        <begin position="34"/>
        <end position="39"/>
    </location>
</feature>
<feature type="strand" evidence="6">
    <location>
        <begin position="41"/>
        <end position="53"/>
    </location>
</feature>
<feature type="strand" evidence="6">
    <location>
        <begin position="59"/>
        <end position="81"/>
    </location>
</feature>
<feature type="turn" evidence="6">
    <location>
        <begin position="82"/>
        <end position="84"/>
    </location>
</feature>
<feature type="strand" evidence="6">
    <location>
        <begin position="85"/>
        <end position="96"/>
    </location>
</feature>
<feature type="turn" evidence="6">
    <location>
        <begin position="98"/>
        <end position="101"/>
    </location>
</feature>
<feature type="strand" evidence="6">
    <location>
        <begin position="102"/>
        <end position="110"/>
    </location>
</feature>
<feature type="strand" evidence="6">
    <location>
        <begin position="113"/>
        <end position="127"/>
    </location>
</feature>
<feature type="strand" evidence="6">
    <location>
        <begin position="130"/>
        <end position="143"/>
    </location>
</feature>
<feature type="strand" evidence="6">
    <location>
        <begin position="146"/>
        <end position="151"/>
    </location>
</feature>
<feature type="helix" evidence="6">
    <location>
        <begin position="152"/>
        <end position="161"/>
    </location>
</feature>
<feature type="strand" evidence="6">
    <location>
        <begin position="168"/>
        <end position="182"/>
    </location>
</feature>
<feature type="strand" evidence="6">
    <location>
        <begin position="184"/>
        <end position="192"/>
    </location>
</feature>
<evidence type="ECO:0000255" key="1">
    <source>
        <dbReference type="PROSITE-ProRule" id="PRU01097"/>
    </source>
</evidence>
<evidence type="ECO:0000255" key="2">
    <source>
        <dbReference type="PROSITE-ProRule" id="PRU10062"/>
    </source>
</evidence>
<evidence type="ECO:0000255" key="3">
    <source>
        <dbReference type="PROSITE-ProRule" id="PRU10063"/>
    </source>
</evidence>
<evidence type="ECO:0000269" key="4">
    <source>
    </source>
</evidence>
<evidence type="ECO:0000305" key="5"/>
<evidence type="ECO:0007829" key="6">
    <source>
        <dbReference type="PDB" id="1PVX"/>
    </source>
</evidence>
<dbReference type="EC" id="3.2.1.8"/>
<dbReference type="PDB" id="1PVX">
    <property type="method" value="X-ray"/>
    <property type="resolution" value="1.59 A"/>
    <property type="chains" value="A=1-194"/>
</dbReference>
<dbReference type="PDBsum" id="1PVX"/>
<dbReference type="SMR" id="P81536"/>
<dbReference type="CAZy" id="GH11">
    <property type="family name" value="Glycoside Hydrolase Family 11"/>
</dbReference>
<dbReference type="iPTMnet" id="P81536"/>
<dbReference type="UniPathway" id="UPA00114"/>
<dbReference type="EvolutionaryTrace" id="P81536"/>
<dbReference type="GO" id="GO:0031176">
    <property type="term" value="F:endo-1,4-beta-xylanase activity"/>
    <property type="evidence" value="ECO:0007669"/>
    <property type="project" value="UniProtKB-EC"/>
</dbReference>
<dbReference type="GO" id="GO:0045493">
    <property type="term" value="P:xylan catabolic process"/>
    <property type="evidence" value="ECO:0007669"/>
    <property type="project" value="UniProtKB-UniPathway"/>
</dbReference>
<dbReference type="FunFam" id="2.60.120.180:FF:000001">
    <property type="entry name" value="Endo-1,4-beta-xylanase"/>
    <property type="match status" value="1"/>
</dbReference>
<dbReference type="Gene3D" id="2.60.120.180">
    <property type="match status" value="1"/>
</dbReference>
<dbReference type="InterPro" id="IPR013320">
    <property type="entry name" value="ConA-like_dom_sf"/>
</dbReference>
<dbReference type="InterPro" id="IPR013319">
    <property type="entry name" value="GH11/12"/>
</dbReference>
<dbReference type="InterPro" id="IPR018208">
    <property type="entry name" value="GH11_AS_1"/>
</dbReference>
<dbReference type="InterPro" id="IPR033119">
    <property type="entry name" value="GH11_AS_2"/>
</dbReference>
<dbReference type="InterPro" id="IPR033123">
    <property type="entry name" value="GH11_dom"/>
</dbReference>
<dbReference type="InterPro" id="IPR001137">
    <property type="entry name" value="Glyco_hydro_11"/>
</dbReference>
<dbReference type="PANTHER" id="PTHR46828:SF3">
    <property type="entry name" value="ENDO-1,4-BETA-XYLANASE"/>
    <property type="match status" value="1"/>
</dbReference>
<dbReference type="PANTHER" id="PTHR46828">
    <property type="entry name" value="ENDO-1,4-BETA-XYLANASE A-RELATED"/>
    <property type="match status" value="1"/>
</dbReference>
<dbReference type="Pfam" id="PF00457">
    <property type="entry name" value="Glyco_hydro_11"/>
    <property type="match status" value="1"/>
</dbReference>
<dbReference type="PRINTS" id="PR00911">
    <property type="entry name" value="GLHYDRLASE11"/>
</dbReference>
<dbReference type="SUPFAM" id="SSF49899">
    <property type="entry name" value="Concanavalin A-like lectins/glucanases"/>
    <property type="match status" value="1"/>
</dbReference>
<dbReference type="PROSITE" id="PS00776">
    <property type="entry name" value="GH11_1"/>
    <property type="match status" value="1"/>
</dbReference>
<dbReference type="PROSITE" id="PS00777">
    <property type="entry name" value="GH11_2"/>
    <property type="match status" value="1"/>
</dbReference>
<dbReference type="PROSITE" id="PS51761">
    <property type="entry name" value="GH11_3"/>
    <property type="match status" value="1"/>
</dbReference>
<proteinExistence type="evidence at protein level"/>
<protein>
    <recommendedName>
        <fullName>Endo-1,4-beta-xylanase</fullName>
        <shortName>Xylanase</shortName>
        <ecNumber>3.2.1.8</ecNumber>
    </recommendedName>
    <alternativeName>
        <fullName>1,4-beta-D-xylan xylanohydrolase</fullName>
    </alternativeName>
    <alternativeName>
        <fullName>PVX</fullName>
    </alternativeName>
</protein>
<reference key="1">
    <citation type="journal article" date="2000" name="J. Mol. Biol.">
        <title>The tertiary structure at 1.59 A resolution and the proposed amino acid sequence of a family-11 xylanase from the thermophilic fungus Paecilomyces varioti bainier.</title>
        <authorList>
            <person name="Kumar P.R."/>
            <person name="Eswaramoorthy S."/>
            <person name="Vithayathil P.J."/>
            <person name="Viswamitra M.A."/>
        </authorList>
    </citation>
    <scope>X-RAY CRYSTALLOGRAPHY (1.59 ANGSTROMS)</scope>
    <scope>PROTEIN SEQUENCE OF 50-58 AND 123-128</scope>
    <scope>ACETYLATION AT GLY-1</scope>
    <source>
        <strain>Bainier</strain>
    </source>
</reference>
<accession>P81536</accession>
<comment type="catalytic activity">
    <reaction>
        <text>Endohydrolysis of (1-&gt;4)-beta-D-xylosidic linkages in xylans.</text>
        <dbReference type="EC" id="3.2.1.8"/>
    </reaction>
</comment>
<comment type="biophysicochemical properties">
    <temperatureDependence>
        <text>Thermostable.</text>
    </temperatureDependence>
</comment>
<comment type="pathway">
    <text>Glycan degradation; xylan degradation.</text>
</comment>
<comment type="similarity">
    <text evidence="5">Belongs to the glycosyl hydrolase 11 (cellulase G) family.</text>
</comment>
<name>XYNA_BYSSP</name>
<organism>
    <name type="scientific">Byssochlamys spectabilis</name>
    <name type="common">Paecilomyces variotii</name>
    <dbReference type="NCBI Taxonomy" id="264951"/>
    <lineage>
        <taxon>Eukaryota</taxon>
        <taxon>Fungi</taxon>
        <taxon>Dikarya</taxon>
        <taxon>Ascomycota</taxon>
        <taxon>Pezizomycotina</taxon>
        <taxon>Eurotiomycetes</taxon>
        <taxon>Eurotiomycetidae</taxon>
        <taxon>Eurotiales</taxon>
        <taxon>Thermoascaceae</taxon>
        <taxon>Paecilomyces</taxon>
    </lineage>
</organism>
<sequence>GTTPNSEGWHDGYYYSWWSDGGGDSTYTNNSGGTYEITWGNGGNLVGGKGWNPGLNARAIHFTGVYQPNGTSYLSVYGWTRNPLVEYYIVENFGSSNPSSGSTDLGTVSCDGSTYTLGQSTRYNAPSIDGTQTFNQYWSVRQDKRSSGTVQTGCHFDAWASAGLNVTGDHYYQIVATEGYFSSGYARITVADVG</sequence>
<keyword id="KW-0002">3D-structure</keyword>
<keyword id="KW-0007">Acetylation</keyword>
<keyword id="KW-0119">Carbohydrate metabolism</keyword>
<keyword id="KW-0903">Direct protein sequencing</keyword>
<keyword id="KW-1015">Disulfide bond</keyword>
<keyword id="KW-0326">Glycosidase</keyword>
<keyword id="KW-0378">Hydrolase</keyword>
<keyword id="KW-0624">Polysaccharide degradation</keyword>
<keyword id="KW-0858">Xylan degradation</keyword>